<sequence>MSEKIRVLLYYKYVSIENAQEYAAKHLEFCKSIGLKGRILIADEGINGTVSGDYETTQKYMDWVHSDERFADLWFKIDEENQQAFRKMFVRYKKEIVHLGLEDNNFDSDINPLETTGEYLNPKQFKEALLDEDTVVLDTRNDYEYDLGHFRGAIRPDIRNFRELPQWVRDNKDKFMEKRVVVYCTGGVRCEKFSGWMVREGFKDVGQLHGGIATYGKDPEVQGELWDGAMYVFDDRISVPINHVNPTVISKDYFDGTPCERYVNCANPFCNKQIFASEENETKYVRGCSPECRAHERNRYVQENGLSRQEWAERLEAIGESLPEFVGA</sequence>
<gene>
    <name evidence="1" type="primary">trhO</name>
    <name type="ordered locus">Spy49_0726</name>
</gene>
<feature type="chain" id="PRO_1000200384" description="tRNA uridine(34) hydroxylase">
    <location>
        <begin position="1"/>
        <end position="328"/>
    </location>
</feature>
<feature type="domain" description="Rhodanese" evidence="1">
    <location>
        <begin position="130"/>
        <end position="224"/>
    </location>
</feature>
<feature type="active site" description="Cysteine persulfide intermediate" evidence="1">
    <location>
        <position position="184"/>
    </location>
</feature>
<comment type="function">
    <text evidence="1">Catalyzes oxygen-dependent 5-hydroxyuridine (ho5U) modification at position 34 in tRNAs.</text>
</comment>
<comment type="catalytic activity">
    <reaction evidence="1">
        <text>uridine(34) in tRNA + AH2 + O2 = 5-hydroxyuridine(34) in tRNA + A + H2O</text>
        <dbReference type="Rhea" id="RHEA:64224"/>
        <dbReference type="Rhea" id="RHEA-COMP:11727"/>
        <dbReference type="Rhea" id="RHEA-COMP:13381"/>
        <dbReference type="ChEBI" id="CHEBI:13193"/>
        <dbReference type="ChEBI" id="CHEBI:15377"/>
        <dbReference type="ChEBI" id="CHEBI:15379"/>
        <dbReference type="ChEBI" id="CHEBI:17499"/>
        <dbReference type="ChEBI" id="CHEBI:65315"/>
        <dbReference type="ChEBI" id="CHEBI:136877"/>
    </reaction>
</comment>
<comment type="similarity">
    <text evidence="1">Belongs to the TrhO family.</text>
</comment>
<name>TRHO_STRPZ</name>
<protein>
    <recommendedName>
        <fullName evidence="1">tRNA uridine(34) hydroxylase</fullName>
        <ecNumber evidence="1">1.14.-.-</ecNumber>
    </recommendedName>
    <alternativeName>
        <fullName evidence="1">tRNA hydroxylation protein O</fullName>
    </alternativeName>
</protein>
<organism>
    <name type="scientific">Streptococcus pyogenes serotype M49 (strain NZ131)</name>
    <dbReference type="NCBI Taxonomy" id="471876"/>
    <lineage>
        <taxon>Bacteria</taxon>
        <taxon>Bacillati</taxon>
        <taxon>Bacillota</taxon>
        <taxon>Bacilli</taxon>
        <taxon>Lactobacillales</taxon>
        <taxon>Streptococcaceae</taxon>
        <taxon>Streptococcus</taxon>
    </lineage>
</organism>
<proteinExistence type="inferred from homology"/>
<dbReference type="EC" id="1.14.-.-" evidence="1"/>
<dbReference type="EMBL" id="CP000829">
    <property type="protein sequence ID" value="ACI61041.1"/>
    <property type="molecule type" value="Genomic_DNA"/>
</dbReference>
<dbReference type="SMR" id="B5XL29"/>
<dbReference type="KEGG" id="soz:Spy49_0726"/>
<dbReference type="HOGENOM" id="CLU_038878_1_0_9"/>
<dbReference type="Proteomes" id="UP000001039">
    <property type="component" value="Chromosome"/>
</dbReference>
<dbReference type="GO" id="GO:0016705">
    <property type="term" value="F:oxidoreductase activity, acting on paired donors, with incorporation or reduction of molecular oxygen"/>
    <property type="evidence" value="ECO:0007669"/>
    <property type="project" value="UniProtKB-UniRule"/>
</dbReference>
<dbReference type="GO" id="GO:0006400">
    <property type="term" value="P:tRNA modification"/>
    <property type="evidence" value="ECO:0007669"/>
    <property type="project" value="UniProtKB-UniRule"/>
</dbReference>
<dbReference type="CDD" id="cd01518">
    <property type="entry name" value="RHOD_YceA"/>
    <property type="match status" value="1"/>
</dbReference>
<dbReference type="Gene3D" id="3.30.70.100">
    <property type="match status" value="1"/>
</dbReference>
<dbReference type="Gene3D" id="3.40.250.10">
    <property type="entry name" value="Rhodanese-like domain"/>
    <property type="match status" value="1"/>
</dbReference>
<dbReference type="HAMAP" id="MF_00469">
    <property type="entry name" value="TrhO"/>
    <property type="match status" value="1"/>
</dbReference>
<dbReference type="InterPro" id="IPR001763">
    <property type="entry name" value="Rhodanese-like_dom"/>
</dbReference>
<dbReference type="InterPro" id="IPR036873">
    <property type="entry name" value="Rhodanese-like_dom_sf"/>
</dbReference>
<dbReference type="InterPro" id="IPR022111">
    <property type="entry name" value="Rhodanese_C"/>
</dbReference>
<dbReference type="InterPro" id="IPR020936">
    <property type="entry name" value="TrhO"/>
</dbReference>
<dbReference type="InterPro" id="IPR040503">
    <property type="entry name" value="TRHO_N"/>
</dbReference>
<dbReference type="NCBIfam" id="NF001135">
    <property type="entry name" value="PRK00142.1-3"/>
    <property type="match status" value="1"/>
</dbReference>
<dbReference type="NCBIfam" id="NF001137">
    <property type="entry name" value="PRK00142.1-5"/>
    <property type="match status" value="1"/>
</dbReference>
<dbReference type="PANTHER" id="PTHR43268:SF3">
    <property type="entry name" value="RHODANESE-LIKE DOMAIN-CONTAINING PROTEIN 7-RELATED"/>
    <property type="match status" value="1"/>
</dbReference>
<dbReference type="PANTHER" id="PTHR43268">
    <property type="entry name" value="THIOSULFATE SULFURTRANSFERASE/RHODANESE-LIKE DOMAIN-CONTAINING PROTEIN 2"/>
    <property type="match status" value="1"/>
</dbReference>
<dbReference type="Pfam" id="PF00581">
    <property type="entry name" value="Rhodanese"/>
    <property type="match status" value="1"/>
</dbReference>
<dbReference type="Pfam" id="PF12368">
    <property type="entry name" value="Rhodanese_C"/>
    <property type="match status" value="1"/>
</dbReference>
<dbReference type="Pfam" id="PF17773">
    <property type="entry name" value="UPF0176_N"/>
    <property type="match status" value="1"/>
</dbReference>
<dbReference type="SMART" id="SM00450">
    <property type="entry name" value="RHOD"/>
    <property type="match status" value="1"/>
</dbReference>
<dbReference type="SUPFAM" id="SSF52821">
    <property type="entry name" value="Rhodanese/Cell cycle control phosphatase"/>
    <property type="match status" value="1"/>
</dbReference>
<dbReference type="PROSITE" id="PS50206">
    <property type="entry name" value="RHODANESE_3"/>
    <property type="match status" value="1"/>
</dbReference>
<accession>B5XL29</accession>
<reference key="1">
    <citation type="journal article" date="2008" name="J. Bacteriol.">
        <title>Genome sequence of a nephritogenic and highly transformable M49 strain of Streptococcus pyogenes.</title>
        <authorList>
            <person name="McShan W.M."/>
            <person name="Ferretti J.J."/>
            <person name="Karasawa T."/>
            <person name="Suvorov A.N."/>
            <person name="Lin S."/>
            <person name="Qin B."/>
            <person name="Jia H."/>
            <person name="Kenton S."/>
            <person name="Najar F."/>
            <person name="Wu H."/>
            <person name="Scott J."/>
            <person name="Roe B.A."/>
            <person name="Savic D.J."/>
        </authorList>
    </citation>
    <scope>NUCLEOTIDE SEQUENCE [LARGE SCALE GENOMIC DNA]</scope>
    <source>
        <strain>NZ131</strain>
    </source>
</reference>
<evidence type="ECO:0000255" key="1">
    <source>
        <dbReference type="HAMAP-Rule" id="MF_00469"/>
    </source>
</evidence>
<keyword id="KW-0560">Oxidoreductase</keyword>
<keyword id="KW-0819">tRNA processing</keyword>